<accession>P64007</accession>
<accession>Q8XDA1</accession>
<gene>
    <name evidence="1" type="primary">dut</name>
    <name type="ordered locus">Z5064</name>
    <name type="ordered locus">ECs4515</name>
</gene>
<reference key="1">
    <citation type="journal article" date="2001" name="Nature">
        <title>Genome sequence of enterohaemorrhagic Escherichia coli O157:H7.</title>
        <authorList>
            <person name="Perna N.T."/>
            <person name="Plunkett G. III"/>
            <person name="Burland V."/>
            <person name="Mau B."/>
            <person name="Glasner J.D."/>
            <person name="Rose D.J."/>
            <person name="Mayhew G.F."/>
            <person name="Evans P.S."/>
            <person name="Gregor J."/>
            <person name="Kirkpatrick H.A."/>
            <person name="Posfai G."/>
            <person name="Hackett J."/>
            <person name="Klink S."/>
            <person name="Boutin A."/>
            <person name="Shao Y."/>
            <person name="Miller L."/>
            <person name="Grotbeck E.J."/>
            <person name="Davis N.W."/>
            <person name="Lim A."/>
            <person name="Dimalanta E.T."/>
            <person name="Potamousis K."/>
            <person name="Apodaca J."/>
            <person name="Anantharaman T.S."/>
            <person name="Lin J."/>
            <person name="Yen G."/>
            <person name="Schwartz D.C."/>
            <person name="Welch R.A."/>
            <person name="Blattner F.R."/>
        </authorList>
    </citation>
    <scope>NUCLEOTIDE SEQUENCE [LARGE SCALE GENOMIC DNA]</scope>
    <source>
        <strain>O157:H7 / EDL933 / ATCC 700927 / EHEC</strain>
    </source>
</reference>
<reference key="2">
    <citation type="journal article" date="2001" name="DNA Res.">
        <title>Complete genome sequence of enterohemorrhagic Escherichia coli O157:H7 and genomic comparison with a laboratory strain K-12.</title>
        <authorList>
            <person name="Hayashi T."/>
            <person name="Makino K."/>
            <person name="Ohnishi M."/>
            <person name="Kurokawa K."/>
            <person name="Ishii K."/>
            <person name="Yokoyama K."/>
            <person name="Han C.-G."/>
            <person name="Ohtsubo E."/>
            <person name="Nakayama K."/>
            <person name="Murata T."/>
            <person name="Tanaka M."/>
            <person name="Tobe T."/>
            <person name="Iida T."/>
            <person name="Takami H."/>
            <person name="Honda T."/>
            <person name="Sasakawa C."/>
            <person name="Ogasawara N."/>
            <person name="Yasunaga T."/>
            <person name="Kuhara S."/>
            <person name="Shiba T."/>
            <person name="Hattori M."/>
            <person name="Shinagawa H."/>
        </authorList>
    </citation>
    <scope>NUCLEOTIDE SEQUENCE [LARGE SCALE GENOMIC DNA]</scope>
    <source>
        <strain>O157:H7 / Sakai / RIMD 0509952 / EHEC</strain>
    </source>
</reference>
<feature type="chain" id="PRO_0000182860" description="Deoxyuridine 5'-triphosphate nucleotidohydrolase">
    <location>
        <begin position="1"/>
        <end position="152"/>
    </location>
</feature>
<feature type="binding site" evidence="1">
    <location>
        <begin position="71"/>
        <end position="73"/>
    </location>
    <ligand>
        <name>substrate</name>
    </ligand>
</feature>
<feature type="binding site" evidence="1">
    <location>
        <position position="84"/>
    </location>
    <ligand>
        <name>substrate</name>
    </ligand>
</feature>
<feature type="binding site" evidence="1">
    <location>
        <begin position="88"/>
        <end position="90"/>
    </location>
    <ligand>
        <name>substrate</name>
    </ligand>
</feature>
<feature type="binding site" evidence="1">
    <location>
        <position position="98"/>
    </location>
    <ligand>
        <name>substrate</name>
    </ligand>
</feature>
<organism>
    <name type="scientific">Escherichia coli O157:H7</name>
    <dbReference type="NCBI Taxonomy" id="83334"/>
    <lineage>
        <taxon>Bacteria</taxon>
        <taxon>Pseudomonadati</taxon>
        <taxon>Pseudomonadota</taxon>
        <taxon>Gammaproteobacteria</taxon>
        <taxon>Enterobacterales</taxon>
        <taxon>Enterobacteriaceae</taxon>
        <taxon>Escherichia</taxon>
    </lineage>
</organism>
<sequence>MMKKIDVKILDPRVGKEFPLPTYATSGSAGLDLRACLDDAVELAPGDTTLVPTGLAIHIADPSLAAMMLPRSGLGHKHGIVLGNLVGLIDSDYQGQLMISVWNRGQDSFTIQPGERIAQMIFVPVVQAEFNLVEDFDATDRGEGGFGHSGRQ</sequence>
<dbReference type="EC" id="3.6.1.23" evidence="1"/>
<dbReference type="EMBL" id="AE005174">
    <property type="protein sequence ID" value="AAG58784.1"/>
    <property type="status" value="ALT_INIT"/>
    <property type="molecule type" value="Genomic_DNA"/>
</dbReference>
<dbReference type="EMBL" id="BA000007">
    <property type="protein sequence ID" value="BAB37938.2"/>
    <property type="molecule type" value="Genomic_DNA"/>
</dbReference>
<dbReference type="PIR" id="C91193">
    <property type="entry name" value="C91193"/>
</dbReference>
<dbReference type="PIR" id="D86040">
    <property type="entry name" value="D86040"/>
</dbReference>
<dbReference type="RefSeq" id="NP_312542.1">
    <property type="nucleotide sequence ID" value="NC_002695.1"/>
</dbReference>
<dbReference type="RefSeq" id="WP_000976070.1">
    <property type="nucleotide sequence ID" value="NZ_VOAI01000021.1"/>
</dbReference>
<dbReference type="SMR" id="P64007"/>
<dbReference type="STRING" id="155864.Z5064"/>
<dbReference type="GeneID" id="915531"/>
<dbReference type="GeneID" id="93778355"/>
<dbReference type="KEGG" id="ece:Z5064"/>
<dbReference type="KEGG" id="ecs:ECs_4515"/>
<dbReference type="PATRIC" id="fig|386585.9.peg.4731"/>
<dbReference type="eggNOG" id="COG0756">
    <property type="taxonomic scope" value="Bacteria"/>
</dbReference>
<dbReference type="HOGENOM" id="CLU_068508_1_1_6"/>
<dbReference type="OMA" id="RSGMGHK"/>
<dbReference type="UniPathway" id="UPA00610">
    <property type="reaction ID" value="UER00666"/>
</dbReference>
<dbReference type="Proteomes" id="UP000000558">
    <property type="component" value="Chromosome"/>
</dbReference>
<dbReference type="Proteomes" id="UP000002519">
    <property type="component" value="Chromosome"/>
</dbReference>
<dbReference type="GO" id="GO:0004170">
    <property type="term" value="F:dUTP diphosphatase activity"/>
    <property type="evidence" value="ECO:0007669"/>
    <property type="project" value="UniProtKB-UniRule"/>
</dbReference>
<dbReference type="GO" id="GO:0000287">
    <property type="term" value="F:magnesium ion binding"/>
    <property type="evidence" value="ECO:0007669"/>
    <property type="project" value="UniProtKB-UniRule"/>
</dbReference>
<dbReference type="GO" id="GO:0006226">
    <property type="term" value="P:dUMP biosynthetic process"/>
    <property type="evidence" value="ECO:0007669"/>
    <property type="project" value="UniProtKB-UniRule"/>
</dbReference>
<dbReference type="GO" id="GO:0046081">
    <property type="term" value="P:dUTP catabolic process"/>
    <property type="evidence" value="ECO:0007669"/>
    <property type="project" value="InterPro"/>
</dbReference>
<dbReference type="CDD" id="cd07557">
    <property type="entry name" value="trimeric_dUTPase"/>
    <property type="match status" value="1"/>
</dbReference>
<dbReference type="FunFam" id="2.70.40.10:FF:000002">
    <property type="entry name" value="dUTP diphosphatase"/>
    <property type="match status" value="1"/>
</dbReference>
<dbReference type="Gene3D" id="2.70.40.10">
    <property type="match status" value="1"/>
</dbReference>
<dbReference type="HAMAP" id="MF_00116">
    <property type="entry name" value="dUTPase_bact"/>
    <property type="match status" value="1"/>
</dbReference>
<dbReference type="InterPro" id="IPR008181">
    <property type="entry name" value="dUTPase"/>
</dbReference>
<dbReference type="InterPro" id="IPR029054">
    <property type="entry name" value="dUTPase-like"/>
</dbReference>
<dbReference type="InterPro" id="IPR036157">
    <property type="entry name" value="dUTPase-like_sf"/>
</dbReference>
<dbReference type="InterPro" id="IPR033704">
    <property type="entry name" value="dUTPase_trimeric"/>
</dbReference>
<dbReference type="NCBIfam" id="TIGR00576">
    <property type="entry name" value="dut"/>
    <property type="match status" value="1"/>
</dbReference>
<dbReference type="NCBIfam" id="NF001862">
    <property type="entry name" value="PRK00601.1"/>
    <property type="match status" value="1"/>
</dbReference>
<dbReference type="PANTHER" id="PTHR11241">
    <property type="entry name" value="DEOXYURIDINE 5'-TRIPHOSPHATE NUCLEOTIDOHYDROLASE"/>
    <property type="match status" value="1"/>
</dbReference>
<dbReference type="PANTHER" id="PTHR11241:SF0">
    <property type="entry name" value="DEOXYURIDINE 5'-TRIPHOSPHATE NUCLEOTIDOHYDROLASE"/>
    <property type="match status" value="1"/>
</dbReference>
<dbReference type="Pfam" id="PF00692">
    <property type="entry name" value="dUTPase"/>
    <property type="match status" value="1"/>
</dbReference>
<dbReference type="SUPFAM" id="SSF51283">
    <property type="entry name" value="dUTPase-like"/>
    <property type="match status" value="1"/>
</dbReference>
<name>DUT_ECO57</name>
<keyword id="KW-0378">Hydrolase</keyword>
<keyword id="KW-0460">Magnesium</keyword>
<keyword id="KW-0479">Metal-binding</keyword>
<keyword id="KW-0546">Nucleotide metabolism</keyword>
<keyword id="KW-1185">Reference proteome</keyword>
<evidence type="ECO:0000255" key="1">
    <source>
        <dbReference type="HAMAP-Rule" id="MF_00116"/>
    </source>
</evidence>
<evidence type="ECO:0000305" key="2"/>
<protein>
    <recommendedName>
        <fullName evidence="1">Deoxyuridine 5'-triphosphate nucleotidohydrolase</fullName>
        <shortName evidence="1">dUTPase</shortName>
        <ecNumber evidence="1">3.6.1.23</ecNumber>
    </recommendedName>
    <alternativeName>
        <fullName evidence="1">dUTP pyrophosphatase</fullName>
    </alternativeName>
</protein>
<proteinExistence type="inferred from homology"/>
<comment type="function">
    <text evidence="1">This enzyme is involved in nucleotide metabolism: it produces dUMP, the immediate precursor of thymidine nucleotides and it decreases the intracellular concentration of dUTP so that uracil cannot be incorporated into DNA.</text>
</comment>
<comment type="catalytic activity">
    <reaction evidence="1">
        <text>dUTP + H2O = dUMP + diphosphate + H(+)</text>
        <dbReference type="Rhea" id="RHEA:10248"/>
        <dbReference type="ChEBI" id="CHEBI:15377"/>
        <dbReference type="ChEBI" id="CHEBI:15378"/>
        <dbReference type="ChEBI" id="CHEBI:33019"/>
        <dbReference type="ChEBI" id="CHEBI:61555"/>
        <dbReference type="ChEBI" id="CHEBI:246422"/>
        <dbReference type="EC" id="3.6.1.23"/>
    </reaction>
</comment>
<comment type="cofactor">
    <cofactor evidence="1">
        <name>Mg(2+)</name>
        <dbReference type="ChEBI" id="CHEBI:18420"/>
    </cofactor>
</comment>
<comment type="pathway">
    <text evidence="1">Pyrimidine metabolism; dUMP biosynthesis; dUMP from dCTP (dUTP route): step 2/2.</text>
</comment>
<comment type="subunit">
    <text evidence="1">Homotrimer.</text>
</comment>
<comment type="similarity">
    <text evidence="1">Belongs to the dUTPase family.</text>
</comment>
<comment type="sequence caution" evidence="2">
    <conflict type="erroneous initiation">
        <sequence resource="EMBL-CDS" id="AAG58784"/>
    </conflict>
    <text>Truncated N-terminus.</text>
</comment>